<dbReference type="EMBL" id="L42023">
    <property type="protein sequence ID" value="AAC21786.1"/>
    <property type="molecule type" value="Genomic_DNA"/>
</dbReference>
<dbReference type="PIR" id="I64142">
    <property type="entry name" value="I64142"/>
</dbReference>
<dbReference type="RefSeq" id="NP_438282.1">
    <property type="nucleotide sequence ID" value="NC_000907.1"/>
</dbReference>
<dbReference type="STRING" id="71421.HI_0108"/>
<dbReference type="EnsemblBacteria" id="AAC21786">
    <property type="protein sequence ID" value="AAC21786"/>
    <property type="gene ID" value="HI_0108"/>
</dbReference>
<dbReference type="KEGG" id="hin:HI_0108"/>
<dbReference type="PATRIC" id="fig|71421.8.peg.112"/>
<dbReference type="eggNOG" id="COG3610">
    <property type="taxonomic scope" value="Bacteria"/>
</dbReference>
<dbReference type="HOGENOM" id="CLU_070277_2_0_6"/>
<dbReference type="OrthoDB" id="9810047at2"/>
<dbReference type="PhylomeDB" id="P44520"/>
<dbReference type="BioCyc" id="HINF71421:G1GJ1-112-MONOMER"/>
<dbReference type="Proteomes" id="UP000000579">
    <property type="component" value="Chromosome"/>
</dbReference>
<dbReference type="GO" id="GO:0005886">
    <property type="term" value="C:plasma membrane"/>
    <property type="evidence" value="ECO:0000318"/>
    <property type="project" value="GO_Central"/>
</dbReference>
<dbReference type="GO" id="GO:0022857">
    <property type="term" value="F:transmembrane transporter activity"/>
    <property type="evidence" value="ECO:0007669"/>
    <property type="project" value="InterPro"/>
</dbReference>
<dbReference type="GO" id="GO:0015744">
    <property type="term" value="P:succinate transport"/>
    <property type="evidence" value="ECO:0000318"/>
    <property type="project" value="GO_Central"/>
</dbReference>
<dbReference type="InterPro" id="IPR010619">
    <property type="entry name" value="ThrE-like_N"/>
</dbReference>
<dbReference type="InterPro" id="IPR024528">
    <property type="entry name" value="ThrE_2"/>
</dbReference>
<dbReference type="InterPro" id="IPR050539">
    <property type="entry name" value="ThrE_Dicarb/AminoAcid_Exp"/>
</dbReference>
<dbReference type="PANTHER" id="PTHR34390:SF1">
    <property type="entry name" value="SUCCINATE TRANSPORTER SUBUNIT YJJB-RELATED"/>
    <property type="match status" value="1"/>
</dbReference>
<dbReference type="PANTHER" id="PTHR34390">
    <property type="entry name" value="UPF0442 PROTEIN YJJB-RELATED"/>
    <property type="match status" value="1"/>
</dbReference>
<dbReference type="Pfam" id="PF06738">
    <property type="entry name" value="ThrE"/>
    <property type="match status" value="1"/>
</dbReference>
<dbReference type="Pfam" id="PF12821">
    <property type="entry name" value="ThrE_2"/>
    <property type="match status" value="1"/>
</dbReference>
<feature type="chain" id="PRO_0000169813" description="Uncharacterized protein HI_0108">
    <location>
        <begin position="1"/>
        <end position="297"/>
    </location>
</feature>
<feature type="transmembrane region" description="Helical" evidence="1">
    <location>
        <begin position="114"/>
        <end position="136"/>
    </location>
</feature>
<feature type="transmembrane region" description="Helical" evidence="1">
    <location>
        <begin position="150"/>
        <end position="170"/>
    </location>
</feature>
<feature type="transmembrane region" description="Helical" evidence="1">
    <location>
        <begin position="197"/>
        <end position="217"/>
    </location>
</feature>
<feature type="transmembrane region" description="Helical" evidence="1">
    <location>
        <begin position="227"/>
        <end position="247"/>
    </location>
</feature>
<feature type="transmembrane region" description="Helical" evidence="1">
    <location>
        <begin position="269"/>
        <end position="289"/>
    </location>
</feature>
<name>Y108_HAEIN</name>
<keyword id="KW-0997">Cell inner membrane</keyword>
<keyword id="KW-1003">Cell membrane</keyword>
<keyword id="KW-0472">Membrane</keyword>
<keyword id="KW-1185">Reference proteome</keyword>
<keyword id="KW-0812">Transmembrane</keyword>
<keyword id="KW-1133">Transmembrane helix</keyword>
<protein>
    <recommendedName>
        <fullName>Uncharacterized protein HI_0108</fullName>
    </recommendedName>
</protein>
<accession>P44520</accession>
<sequence>MEHEYQRAVTRVCVQTALLLLQHGAESTVVVQMAQRLGVALGVESVECALTANAVVLTTLSDNHCITTARKNTDKGINMQMVTDVQRIVIAVEHHLYELEIAQRKLDQLKPLKYNRWLVVFMIGLSCAAFAHLSSGDWIICGITIFMLKLLYDMLFAAIPAVGFALVFNVPPKALKYCAILAALGHVTRTLLLHINMPIVFATFFATCVIGFLGVHLSHRYLAHPKAFTVAAIIPMIPGVHAYKAMISMVQIHHFGFSDALFEQMISSFINTSFILGAIVFGLALPGLLFYRQKPVV</sequence>
<reference key="1">
    <citation type="journal article" date="1995" name="Science">
        <title>Whole-genome random sequencing and assembly of Haemophilus influenzae Rd.</title>
        <authorList>
            <person name="Fleischmann R.D."/>
            <person name="Adams M.D."/>
            <person name="White O."/>
            <person name="Clayton R.A."/>
            <person name="Kirkness E.F."/>
            <person name="Kerlavage A.R."/>
            <person name="Bult C.J."/>
            <person name="Tomb J.-F."/>
            <person name="Dougherty B.A."/>
            <person name="Merrick J.M."/>
            <person name="McKenney K."/>
            <person name="Sutton G.G."/>
            <person name="FitzHugh W."/>
            <person name="Fields C.A."/>
            <person name="Gocayne J.D."/>
            <person name="Scott J.D."/>
            <person name="Shirley R."/>
            <person name="Liu L.-I."/>
            <person name="Glodek A."/>
            <person name="Kelley J.M."/>
            <person name="Weidman J.F."/>
            <person name="Phillips C.A."/>
            <person name="Spriggs T."/>
            <person name="Hedblom E."/>
            <person name="Cotton M.D."/>
            <person name="Utterback T.R."/>
            <person name="Hanna M.C."/>
            <person name="Nguyen D.T."/>
            <person name="Saudek D.M."/>
            <person name="Brandon R.C."/>
            <person name="Fine L.D."/>
            <person name="Fritchman J.L."/>
            <person name="Fuhrmann J.L."/>
            <person name="Geoghagen N.S.M."/>
            <person name="Gnehm C.L."/>
            <person name="McDonald L.A."/>
            <person name="Small K.V."/>
            <person name="Fraser C.M."/>
            <person name="Smith H.O."/>
            <person name="Venter J.C."/>
        </authorList>
    </citation>
    <scope>NUCLEOTIDE SEQUENCE [LARGE SCALE GENOMIC DNA]</scope>
    <source>
        <strain>ATCC 51907 / DSM 11121 / KW20 / Rd</strain>
    </source>
</reference>
<organism>
    <name type="scientific">Haemophilus influenzae (strain ATCC 51907 / DSM 11121 / KW20 / Rd)</name>
    <dbReference type="NCBI Taxonomy" id="71421"/>
    <lineage>
        <taxon>Bacteria</taxon>
        <taxon>Pseudomonadati</taxon>
        <taxon>Pseudomonadota</taxon>
        <taxon>Gammaproteobacteria</taxon>
        <taxon>Pasteurellales</taxon>
        <taxon>Pasteurellaceae</taxon>
        <taxon>Haemophilus</taxon>
    </lineage>
</organism>
<comment type="subcellular location">
    <subcellularLocation>
        <location evidence="2">Cell inner membrane</location>
        <topology evidence="1">Multi-pass membrane protein</topology>
    </subcellularLocation>
</comment>
<comment type="similarity">
    <text evidence="2">Belongs to the ThrE exporter (TC 2.A.79) family.</text>
</comment>
<proteinExistence type="inferred from homology"/>
<evidence type="ECO:0000255" key="1"/>
<evidence type="ECO:0000305" key="2"/>
<gene>
    <name type="ordered locus">HI_0108</name>
</gene>